<accession>A6MMW5</accession>
<keyword id="KW-0150">Chloroplast</keyword>
<keyword id="KW-0934">Plastid</keyword>
<keyword id="KW-0687">Ribonucleoprotein</keyword>
<keyword id="KW-0689">Ribosomal protein</keyword>
<sequence length="66" mass="7406">MAAGKDVRVTVILECTSCAKNGANKKSPGVSRYITEKNRHNTPGRLELIKFCPYCYKHTIHGEIKK</sequence>
<geneLocation type="chloroplast"/>
<proteinExistence type="inferred from homology"/>
<protein>
    <recommendedName>
        <fullName evidence="1">Large ribosomal subunit protein bL33c</fullName>
    </recommendedName>
    <alternativeName>
        <fullName evidence="2">50S ribosomal protein L33, chloroplastic</fullName>
    </alternativeName>
</protein>
<gene>
    <name evidence="1" type="primary">rpl33</name>
</gene>
<reference key="1">
    <citation type="journal article" date="2007" name="Mol. Phylogenet. Evol.">
        <title>Phylogenetic and evolutionary implications of complete chloroplast genome sequences of four early-diverging angiosperms: Buxus (Buxaceae), Chloranthus (Chloranthaceae), Dioscorea (Dioscoreaceae), and Illicium (Schisandraceae).</title>
        <authorList>
            <person name="Hansen D.R."/>
            <person name="Dastidar S.G."/>
            <person name="Cai Z."/>
            <person name="Penaflor C."/>
            <person name="Kuehl J.V."/>
            <person name="Boore J.L."/>
            <person name="Jansen R.K."/>
        </authorList>
    </citation>
    <scope>NUCLEOTIDE SEQUENCE [LARGE SCALE GENOMIC DNA]</scope>
</reference>
<name>RK33_ILLOL</name>
<comment type="subcellular location">
    <subcellularLocation>
        <location>Plastid</location>
        <location>Chloroplast</location>
    </subcellularLocation>
</comment>
<comment type="similarity">
    <text evidence="1">Belongs to the bacterial ribosomal protein bL33 family.</text>
</comment>
<evidence type="ECO:0000255" key="1">
    <source>
        <dbReference type="HAMAP-Rule" id="MF_00294"/>
    </source>
</evidence>
<evidence type="ECO:0000305" key="2"/>
<organism>
    <name type="scientific">Illicium oligandrum</name>
    <name type="common">Star anise</name>
    <dbReference type="NCBI Taxonomy" id="145286"/>
    <lineage>
        <taxon>Eukaryota</taxon>
        <taxon>Viridiplantae</taxon>
        <taxon>Streptophyta</taxon>
        <taxon>Embryophyta</taxon>
        <taxon>Tracheophyta</taxon>
        <taxon>Spermatophyta</taxon>
        <taxon>Magnoliopsida</taxon>
        <taxon>Austrobaileyales</taxon>
        <taxon>Schisandraceae</taxon>
        <taxon>Illicium</taxon>
    </lineage>
</organism>
<feature type="chain" id="PRO_0000356807" description="Large ribosomal subunit protein bL33c">
    <location>
        <begin position="1"/>
        <end position="66"/>
    </location>
</feature>
<dbReference type="EMBL" id="EF380354">
    <property type="protein sequence ID" value="ABQ52540.1"/>
    <property type="molecule type" value="Genomic_DNA"/>
</dbReference>
<dbReference type="RefSeq" id="YP_001294291.1">
    <property type="nucleotide sequence ID" value="NC_009600.1"/>
</dbReference>
<dbReference type="GeneID" id="5236772"/>
<dbReference type="GO" id="GO:0009507">
    <property type="term" value="C:chloroplast"/>
    <property type="evidence" value="ECO:0007669"/>
    <property type="project" value="UniProtKB-SubCell"/>
</dbReference>
<dbReference type="GO" id="GO:1990904">
    <property type="term" value="C:ribonucleoprotein complex"/>
    <property type="evidence" value="ECO:0007669"/>
    <property type="project" value="UniProtKB-KW"/>
</dbReference>
<dbReference type="GO" id="GO:0005840">
    <property type="term" value="C:ribosome"/>
    <property type="evidence" value="ECO:0007669"/>
    <property type="project" value="UniProtKB-KW"/>
</dbReference>
<dbReference type="GO" id="GO:0003735">
    <property type="term" value="F:structural constituent of ribosome"/>
    <property type="evidence" value="ECO:0007669"/>
    <property type="project" value="InterPro"/>
</dbReference>
<dbReference type="GO" id="GO:0006412">
    <property type="term" value="P:translation"/>
    <property type="evidence" value="ECO:0007669"/>
    <property type="project" value="UniProtKB-UniRule"/>
</dbReference>
<dbReference type="Gene3D" id="2.20.28.120">
    <property type="entry name" value="Ribosomal protein L33"/>
    <property type="match status" value="1"/>
</dbReference>
<dbReference type="HAMAP" id="MF_00294">
    <property type="entry name" value="Ribosomal_bL33"/>
    <property type="match status" value="1"/>
</dbReference>
<dbReference type="InterPro" id="IPR001705">
    <property type="entry name" value="Ribosomal_bL33"/>
</dbReference>
<dbReference type="InterPro" id="IPR018264">
    <property type="entry name" value="Ribosomal_bL33_CS"/>
</dbReference>
<dbReference type="InterPro" id="IPR038584">
    <property type="entry name" value="Ribosomal_bL33_sf"/>
</dbReference>
<dbReference type="InterPro" id="IPR011332">
    <property type="entry name" value="Ribosomal_zn-bd"/>
</dbReference>
<dbReference type="NCBIfam" id="NF001764">
    <property type="entry name" value="PRK00504.1"/>
    <property type="match status" value="1"/>
</dbReference>
<dbReference type="NCBIfam" id="NF001860">
    <property type="entry name" value="PRK00595.1"/>
    <property type="match status" value="1"/>
</dbReference>
<dbReference type="NCBIfam" id="TIGR01023">
    <property type="entry name" value="rpmG_bact"/>
    <property type="match status" value="1"/>
</dbReference>
<dbReference type="PANTHER" id="PTHR43168">
    <property type="entry name" value="50S RIBOSOMAL PROTEIN L33, CHLOROPLASTIC"/>
    <property type="match status" value="1"/>
</dbReference>
<dbReference type="PANTHER" id="PTHR43168:SF2">
    <property type="entry name" value="LARGE RIBOSOMAL SUBUNIT PROTEIN BL33C"/>
    <property type="match status" value="1"/>
</dbReference>
<dbReference type="Pfam" id="PF00471">
    <property type="entry name" value="Ribosomal_L33"/>
    <property type="match status" value="1"/>
</dbReference>
<dbReference type="SUPFAM" id="SSF57829">
    <property type="entry name" value="Zn-binding ribosomal proteins"/>
    <property type="match status" value="1"/>
</dbReference>
<dbReference type="PROSITE" id="PS00582">
    <property type="entry name" value="RIBOSOMAL_L33"/>
    <property type="match status" value="1"/>
</dbReference>